<name>RSMH_SULDN</name>
<feature type="chain" id="PRO_0000387175" description="Ribosomal RNA small subunit methyltransferase H">
    <location>
        <begin position="1"/>
        <end position="307"/>
    </location>
</feature>
<feature type="binding site" evidence="1">
    <location>
        <begin position="34"/>
        <end position="36"/>
    </location>
    <ligand>
        <name>S-adenosyl-L-methionine</name>
        <dbReference type="ChEBI" id="CHEBI:59789"/>
    </ligand>
</feature>
<feature type="binding site" evidence="1">
    <location>
        <position position="53"/>
    </location>
    <ligand>
        <name>S-adenosyl-L-methionine</name>
        <dbReference type="ChEBI" id="CHEBI:59789"/>
    </ligand>
</feature>
<feature type="binding site" evidence="1">
    <location>
        <position position="88"/>
    </location>
    <ligand>
        <name>S-adenosyl-L-methionine</name>
        <dbReference type="ChEBI" id="CHEBI:59789"/>
    </ligand>
</feature>
<feature type="binding site" evidence="1">
    <location>
        <position position="102"/>
    </location>
    <ligand>
        <name>S-adenosyl-L-methionine</name>
        <dbReference type="ChEBI" id="CHEBI:59789"/>
    </ligand>
</feature>
<feature type="binding site" evidence="1">
    <location>
        <position position="109"/>
    </location>
    <ligand>
        <name>S-adenosyl-L-methionine</name>
        <dbReference type="ChEBI" id="CHEBI:59789"/>
    </ligand>
</feature>
<gene>
    <name evidence="1" type="primary">rsmH</name>
    <name type="synonym">mraW</name>
    <name type="ordered locus">Suden_0797</name>
</gene>
<evidence type="ECO:0000255" key="1">
    <source>
        <dbReference type="HAMAP-Rule" id="MF_01007"/>
    </source>
</evidence>
<proteinExistence type="inferred from homology"/>
<sequence>MQTIPHVPVLYREVLEQFKNIKNGIVIDCTMGYGGHTSLILDANPNIKLIAIDQDQSAIDFSTKRLEPYGDRVVIKKGRFSTIIKEILKEYDISDIRGILADIGVSSLQLDKKERGFSFFSENLDMRMDEDAPLNANIVINEYSSHELQRVLLEYGELRNYKQIASFIVSNRPFYSAKELSDALRHLMPSGKKIHPATLLMQAIRIEVNNELGELESLLDTIQERKFLDTKVAIISFHSLEDRIVKNRFNEWRASCICPQEAMRCTCTNDNSLGNILTKKPIIAQMDEIQANPRSRSAKLRVFEMKK</sequence>
<accession>Q30SF5</accession>
<organism>
    <name type="scientific">Sulfurimonas denitrificans (strain ATCC 33889 / DSM 1251)</name>
    <name type="common">Thiomicrospira denitrificans (strain ATCC 33889 / DSM 1251)</name>
    <dbReference type="NCBI Taxonomy" id="326298"/>
    <lineage>
        <taxon>Bacteria</taxon>
        <taxon>Pseudomonadati</taxon>
        <taxon>Campylobacterota</taxon>
        <taxon>Epsilonproteobacteria</taxon>
        <taxon>Campylobacterales</taxon>
        <taxon>Sulfurimonadaceae</taxon>
        <taxon>Sulfurimonas</taxon>
    </lineage>
</organism>
<reference key="1">
    <citation type="journal article" date="2008" name="Appl. Environ. Microbiol.">
        <title>Genome of the epsilonproteobacterial chemolithoautotroph Sulfurimonas denitrificans.</title>
        <authorList>
            <person name="Sievert S.M."/>
            <person name="Scott K.M."/>
            <person name="Klotz M.G."/>
            <person name="Chain P.S.G."/>
            <person name="Hauser L.J."/>
            <person name="Hemp J."/>
            <person name="Huegler M."/>
            <person name="Land M."/>
            <person name="Lapidus A."/>
            <person name="Larimer F.W."/>
            <person name="Lucas S."/>
            <person name="Malfatti S.A."/>
            <person name="Meyer F."/>
            <person name="Paulsen I.T."/>
            <person name="Ren Q."/>
            <person name="Simon J."/>
            <person name="Bailey K."/>
            <person name="Diaz E."/>
            <person name="Fitzpatrick K.A."/>
            <person name="Glover B."/>
            <person name="Gwatney N."/>
            <person name="Korajkic A."/>
            <person name="Long A."/>
            <person name="Mobberley J.M."/>
            <person name="Pantry S.N."/>
            <person name="Pazder G."/>
            <person name="Peterson S."/>
            <person name="Quintanilla J.D."/>
            <person name="Sprinkle R."/>
            <person name="Stephens J."/>
            <person name="Thomas P."/>
            <person name="Vaughn R."/>
            <person name="Weber M.J."/>
            <person name="Wooten L.L."/>
        </authorList>
    </citation>
    <scope>NUCLEOTIDE SEQUENCE [LARGE SCALE GENOMIC DNA]</scope>
    <source>
        <strain>ATCC 33889 / DSM 1251</strain>
    </source>
</reference>
<keyword id="KW-0963">Cytoplasm</keyword>
<keyword id="KW-0489">Methyltransferase</keyword>
<keyword id="KW-1185">Reference proteome</keyword>
<keyword id="KW-0698">rRNA processing</keyword>
<keyword id="KW-0949">S-adenosyl-L-methionine</keyword>
<keyword id="KW-0808">Transferase</keyword>
<dbReference type="EC" id="2.1.1.199" evidence="1"/>
<dbReference type="EMBL" id="CP000153">
    <property type="protein sequence ID" value="ABB44076.1"/>
    <property type="molecule type" value="Genomic_DNA"/>
</dbReference>
<dbReference type="RefSeq" id="WP_011372429.1">
    <property type="nucleotide sequence ID" value="NC_007575.1"/>
</dbReference>
<dbReference type="SMR" id="Q30SF5"/>
<dbReference type="STRING" id="326298.Suden_0797"/>
<dbReference type="KEGG" id="tdn:Suden_0797"/>
<dbReference type="eggNOG" id="COG0275">
    <property type="taxonomic scope" value="Bacteria"/>
</dbReference>
<dbReference type="HOGENOM" id="CLU_038422_3_0_7"/>
<dbReference type="OrthoDB" id="9806637at2"/>
<dbReference type="Proteomes" id="UP000002714">
    <property type="component" value="Chromosome"/>
</dbReference>
<dbReference type="GO" id="GO:0005737">
    <property type="term" value="C:cytoplasm"/>
    <property type="evidence" value="ECO:0007669"/>
    <property type="project" value="UniProtKB-SubCell"/>
</dbReference>
<dbReference type="GO" id="GO:0071424">
    <property type="term" value="F:rRNA (cytosine-N4-)-methyltransferase activity"/>
    <property type="evidence" value="ECO:0007669"/>
    <property type="project" value="UniProtKB-UniRule"/>
</dbReference>
<dbReference type="GO" id="GO:0070475">
    <property type="term" value="P:rRNA base methylation"/>
    <property type="evidence" value="ECO:0007669"/>
    <property type="project" value="UniProtKB-UniRule"/>
</dbReference>
<dbReference type="Gene3D" id="1.10.150.170">
    <property type="entry name" value="Putative methyltransferase TM0872, insert domain"/>
    <property type="match status" value="1"/>
</dbReference>
<dbReference type="Gene3D" id="3.40.50.150">
    <property type="entry name" value="Vaccinia Virus protein VP39"/>
    <property type="match status" value="1"/>
</dbReference>
<dbReference type="HAMAP" id="MF_01007">
    <property type="entry name" value="16SrRNA_methyltr_H"/>
    <property type="match status" value="1"/>
</dbReference>
<dbReference type="InterPro" id="IPR002903">
    <property type="entry name" value="RsmH"/>
</dbReference>
<dbReference type="InterPro" id="IPR023397">
    <property type="entry name" value="SAM-dep_MeTrfase_MraW_recog"/>
</dbReference>
<dbReference type="InterPro" id="IPR029063">
    <property type="entry name" value="SAM-dependent_MTases_sf"/>
</dbReference>
<dbReference type="NCBIfam" id="TIGR00006">
    <property type="entry name" value="16S rRNA (cytosine(1402)-N(4))-methyltransferase RsmH"/>
    <property type="match status" value="1"/>
</dbReference>
<dbReference type="PANTHER" id="PTHR11265:SF0">
    <property type="entry name" value="12S RRNA N4-METHYLCYTIDINE METHYLTRANSFERASE"/>
    <property type="match status" value="1"/>
</dbReference>
<dbReference type="PANTHER" id="PTHR11265">
    <property type="entry name" value="S-ADENOSYL-METHYLTRANSFERASE MRAW"/>
    <property type="match status" value="1"/>
</dbReference>
<dbReference type="Pfam" id="PF01795">
    <property type="entry name" value="Methyltransf_5"/>
    <property type="match status" value="1"/>
</dbReference>
<dbReference type="PIRSF" id="PIRSF004486">
    <property type="entry name" value="MraW"/>
    <property type="match status" value="1"/>
</dbReference>
<dbReference type="SUPFAM" id="SSF81799">
    <property type="entry name" value="Putative methyltransferase TM0872, insert domain"/>
    <property type="match status" value="1"/>
</dbReference>
<dbReference type="SUPFAM" id="SSF53335">
    <property type="entry name" value="S-adenosyl-L-methionine-dependent methyltransferases"/>
    <property type="match status" value="1"/>
</dbReference>
<comment type="function">
    <text evidence="1">Specifically methylates the N4 position of cytidine in position 1402 (C1402) of 16S rRNA.</text>
</comment>
<comment type="catalytic activity">
    <reaction evidence="1">
        <text>cytidine(1402) in 16S rRNA + S-adenosyl-L-methionine = N(4)-methylcytidine(1402) in 16S rRNA + S-adenosyl-L-homocysteine + H(+)</text>
        <dbReference type="Rhea" id="RHEA:42928"/>
        <dbReference type="Rhea" id="RHEA-COMP:10286"/>
        <dbReference type="Rhea" id="RHEA-COMP:10287"/>
        <dbReference type="ChEBI" id="CHEBI:15378"/>
        <dbReference type="ChEBI" id="CHEBI:57856"/>
        <dbReference type="ChEBI" id="CHEBI:59789"/>
        <dbReference type="ChEBI" id="CHEBI:74506"/>
        <dbReference type="ChEBI" id="CHEBI:82748"/>
        <dbReference type="EC" id="2.1.1.199"/>
    </reaction>
</comment>
<comment type="subcellular location">
    <subcellularLocation>
        <location evidence="1">Cytoplasm</location>
    </subcellularLocation>
</comment>
<comment type="similarity">
    <text evidence="1">Belongs to the methyltransferase superfamily. RsmH family.</text>
</comment>
<protein>
    <recommendedName>
        <fullName evidence="1">Ribosomal RNA small subunit methyltransferase H</fullName>
        <ecNumber evidence="1">2.1.1.199</ecNumber>
    </recommendedName>
    <alternativeName>
        <fullName evidence="1">16S rRNA m(4)C1402 methyltransferase</fullName>
    </alternativeName>
    <alternativeName>
        <fullName evidence="1">rRNA (cytosine-N(4)-)-methyltransferase RsmH</fullName>
    </alternativeName>
</protein>